<organism>
    <name type="scientific">Rhodospirillum rubrum (strain ATCC 11170 / ATH 1.1.1 / DSM 467 / LMG 4362 / NCIMB 8255 / S1)</name>
    <dbReference type="NCBI Taxonomy" id="269796"/>
    <lineage>
        <taxon>Bacteria</taxon>
        <taxon>Pseudomonadati</taxon>
        <taxon>Pseudomonadota</taxon>
        <taxon>Alphaproteobacteria</taxon>
        <taxon>Rhodospirillales</taxon>
        <taxon>Rhodospirillaceae</taxon>
        <taxon>Rhodospirillum</taxon>
    </lineage>
</organism>
<evidence type="ECO:0000255" key="1">
    <source>
        <dbReference type="HAMAP-Rule" id="MF_00180"/>
    </source>
</evidence>
<sequence>MNQIFANPLSLPGTAQERVSRAVDSLRQGQGVIVVDDEDRENEGDLIFAAETLTAEQMSRMIRDGSGIVCLILTDPDLDRLALPPMVAHNTSRNGTGFTVSIEAREGVTTGVSAADRVTTIRAAIDPASTADDLARPGHVFPLRAHADGLSARRGHTEATIALMRLAGLRPAGVLCEVMNPDGTMARLPTLIGYGQAHGLPIVSIEDLVAVGAR</sequence>
<protein>
    <recommendedName>
        <fullName evidence="1">3,4-dihydroxy-2-butanone 4-phosphate synthase</fullName>
        <shortName evidence="1">DHBP synthase</shortName>
        <ecNumber evidence="1">4.1.99.12</ecNumber>
    </recommendedName>
</protein>
<comment type="function">
    <text evidence="1">Catalyzes the conversion of D-ribulose 5-phosphate to formate and 3,4-dihydroxy-2-butanone 4-phosphate.</text>
</comment>
<comment type="catalytic activity">
    <reaction evidence="1">
        <text>D-ribulose 5-phosphate = (2S)-2-hydroxy-3-oxobutyl phosphate + formate + H(+)</text>
        <dbReference type="Rhea" id="RHEA:18457"/>
        <dbReference type="ChEBI" id="CHEBI:15378"/>
        <dbReference type="ChEBI" id="CHEBI:15740"/>
        <dbReference type="ChEBI" id="CHEBI:58121"/>
        <dbReference type="ChEBI" id="CHEBI:58830"/>
        <dbReference type="EC" id="4.1.99.12"/>
    </reaction>
</comment>
<comment type="cofactor">
    <cofactor evidence="1">
        <name>Mg(2+)</name>
        <dbReference type="ChEBI" id="CHEBI:18420"/>
    </cofactor>
    <cofactor evidence="1">
        <name>Mn(2+)</name>
        <dbReference type="ChEBI" id="CHEBI:29035"/>
    </cofactor>
    <text evidence="1">Binds 2 divalent metal cations per subunit. Magnesium or manganese.</text>
</comment>
<comment type="pathway">
    <text evidence="1">Cofactor biosynthesis; riboflavin biosynthesis; 2-hydroxy-3-oxobutyl phosphate from D-ribulose 5-phosphate: step 1/1.</text>
</comment>
<comment type="subunit">
    <text evidence="1">Homodimer.</text>
</comment>
<comment type="similarity">
    <text evidence="1">Belongs to the DHBP synthase family.</text>
</comment>
<accession>Q2RS98</accession>
<name>RIBB_RHORT</name>
<dbReference type="EC" id="4.1.99.12" evidence="1"/>
<dbReference type="EMBL" id="CP000230">
    <property type="protein sequence ID" value="ABC22997.1"/>
    <property type="molecule type" value="Genomic_DNA"/>
</dbReference>
<dbReference type="RefSeq" id="WP_011390046.1">
    <property type="nucleotide sequence ID" value="NC_007643.1"/>
</dbReference>
<dbReference type="RefSeq" id="YP_427284.1">
    <property type="nucleotide sequence ID" value="NC_007643.1"/>
</dbReference>
<dbReference type="SMR" id="Q2RS98"/>
<dbReference type="STRING" id="269796.Rru_A2197"/>
<dbReference type="EnsemblBacteria" id="ABC22997">
    <property type="protein sequence ID" value="ABC22997"/>
    <property type="gene ID" value="Rru_A2197"/>
</dbReference>
<dbReference type="KEGG" id="rru:Rru_A2197"/>
<dbReference type="PATRIC" id="fig|269796.9.peg.2293"/>
<dbReference type="eggNOG" id="COG0108">
    <property type="taxonomic scope" value="Bacteria"/>
</dbReference>
<dbReference type="HOGENOM" id="CLU_020273_3_0_5"/>
<dbReference type="PhylomeDB" id="Q2RS98"/>
<dbReference type="UniPathway" id="UPA00275">
    <property type="reaction ID" value="UER00399"/>
</dbReference>
<dbReference type="Proteomes" id="UP000001929">
    <property type="component" value="Chromosome"/>
</dbReference>
<dbReference type="GO" id="GO:0005829">
    <property type="term" value="C:cytosol"/>
    <property type="evidence" value="ECO:0007669"/>
    <property type="project" value="TreeGrafter"/>
</dbReference>
<dbReference type="GO" id="GO:0008686">
    <property type="term" value="F:3,4-dihydroxy-2-butanone-4-phosphate synthase activity"/>
    <property type="evidence" value="ECO:0007669"/>
    <property type="project" value="UniProtKB-UniRule"/>
</dbReference>
<dbReference type="GO" id="GO:0000287">
    <property type="term" value="F:magnesium ion binding"/>
    <property type="evidence" value="ECO:0007669"/>
    <property type="project" value="UniProtKB-UniRule"/>
</dbReference>
<dbReference type="GO" id="GO:0030145">
    <property type="term" value="F:manganese ion binding"/>
    <property type="evidence" value="ECO:0007669"/>
    <property type="project" value="UniProtKB-UniRule"/>
</dbReference>
<dbReference type="GO" id="GO:0009231">
    <property type="term" value="P:riboflavin biosynthetic process"/>
    <property type="evidence" value="ECO:0007669"/>
    <property type="project" value="UniProtKB-UniRule"/>
</dbReference>
<dbReference type="FunFam" id="3.90.870.10:FF:000002">
    <property type="entry name" value="3,4-dihydroxy-2-butanone 4-phosphate synthase"/>
    <property type="match status" value="1"/>
</dbReference>
<dbReference type="Gene3D" id="3.90.870.10">
    <property type="entry name" value="DHBP synthase"/>
    <property type="match status" value="1"/>
</dbReference>
<dbReference type="HAMAP" id="MF_00180">
    <property type="entry name" value="RibB"/>
    <property type="match status" value="1"/>
</dbReference>
<dbReference type="InterPro" id="IPR017945">
    <property type="entry name" value="DHBP_synth_RibB-like_a/b_dom"/>
</dbReference>
<dbReference type="InterPro" id="IPR000422">
    <property type="entry name" value="DHBP_synthase_RibB"/>
</dbReference>
<dbReference type="NCBIfam" id="TIGR00506">
    <property type="entry name" value="ribB"/>
    <property type="match status" value="1"/>
</dbReference>
<dbReference type="PANTHER" id="PTHR21327:SF38">
    <property type="entry name" value="3,4-DIHYDROXY-2-BUTANONE 4-PHOSPHATE SYNTHASE"/>
    <property type="match status" value="1"/>
</dbReference>
<dbReference type="PANTHER" id="PTHR21327">
    <property type="entry name" value="GTP CYCLOHYDROLASE II-RELATED"/>
    <property type="match status" value="1"/>
</dbReference>
<dbReference type="Pfam" id="PF00926">
    <property type="entry name" value="DHBP_synthase"/>
    <property type="match status" value="1"/>
</dbReference>
<dbReference type="SUPFAM" id="SSF55821">
    <property type="entry name" value="YrdC/RibB"/>
    <property type="match status" value="1"/>
</dbReference>
<gene>
    <name evidence="1" type="primary">ribB</name>
    <name type="ordered locus">Rru_A2197</name>
</gene>
<feature type="chain" id="PRO_1000040622" description="3,4-dihydroxy-2-butanone 4-phosphate synthase">
    <location>
        <begin position="1"/>
        <end position="214"/>
    </location>
</feature>
<feature type="binding site" evidence="1">
    <location>
        <begin position="40"/>
        <end position="41"/>
    </location>
    <ligand>
        <name>D-ribulose 5-phosphate</name>
        <dbReference type="ChEBI" id="CHEBI:58121"/>
    </ligand>
</feature>
<feature type="binding site" evidence="1">
    <location>
        <position position="41"/>
    </location>
    <ligand>
        <name>Mg(2+)</name>
        <dbReference type="ChEBI" id="CHEBI:18420"/>
        <label>1</label>
    </ligand>
</feature>
<feature type="binding site" evidence="1">
    <location>
        <position position="41"/>
    </location>
    <ligand>
        <name>Mg(2+)</name>
        <dbReference type="ChEBI" id="CHEBI:18420"/>
        <label>2</label>
    </ligand>
</feature>
<feature type="binding site" evidence="1">
    <location>
        <position position="45"/>
    </location>
    <ligand>
        <name>D-ribulose 5-phosphate</name>
        <dbReference type="ChEBI" id="CHEBI:58121"/>
    </ligand>
</feature>
<feature type="binding site" evidence="1">
    <location>
        <begin position="153"/>
        <end position="157"/>
    </location>
    <ligand>
        <name>D-ribulose 5-phosphate</name>
        <dbReference type="ChEBI" id="CHEBI:58121"/>
    </ligand>
</feature>
<feature type="binding site" evidence="1">
    <location>
        <position position="156"/>
    </location>
    <ligand>
        <name>Mg(2+)</name>
        <dbReference type="ChEBI" id="CHEBI:18420"/>
        <label>2</label>
    </ligand>
</feature>
<feature type="binding site" evidence="1">
    <location>
        <position position="177"/>
    </location>
    <ligand>
        <name>D-ribulose 5-phosphate</name>
        <dbReference type="ChEBI" id="CHEBI:58121"/>
    </ligand>
</feature>
<feature type="site" description="Essential for catalytic activity" evidence="1">
    <location>
        <position position="139"/>
    </location>
</feature>
<feature type="site" description="Essential for catalytic activity" evidence="1">
    <location>
        <position position="177"/>
    </location>
</feature>
<keyword id="KW-0456">Lyase</keyword>
<keyword id="KW-0460">Magnesium</keyword>
<keyword id="KW-0464">Manganese</keyword>
<keyword id="KW-0479">Metal-binding</keyword>
<keyword id="KW-1185">Reference proteome</keyword>
<keyword id="KW-0686">Riboflavin biosynthesis</keyword>
<proteinExistence type="inferred from homology"/>
<reference key="1">
    <citation type="journal article" date="2011" name="Stand. Genomic Sci.">
        <title>Complete genome sequence of Rhodospirillum rubrum type strain (S1).</title>
        <authorList>
            <person name="Munk A.C."/>
            <person name="Copeland A."/>
            <person name="Lucas S."/>
            <person name="Lapidus A."/>
            <person name="Del Rio T.G."/>
            <person name="Barry K."/>
            <person name="Detter J.C."/>
            <person name="Hammon N."/>
            <person name="Israni S."/>
            <person name="Pitluck S."/>
            <person name="Brettin T."/>
            <person name="Bruce D."/>
            <person name="Han C."/>
            <person name="Tapia R."/>
            <person name="Gilna P."/>
            <person name="Schmutz J."/>
            <person name="Larimer F."/>
            <person name="Land M."/>
            <person name="Kyrpides N.C."/>
            <person name="Mavromatis K."/>
            <person name="Richardson P."/>
            <person name="Rohde M."/>
            <person name="Goeker M."/>
            <person name="Klenk H.P."/>
            <person name="Zhang Y."/>
            <person name="Roberts G.P."/>
            <person name="Reslewic S."/>
            <person name="Schwartz D.C."/>
        </authorList>
    </citation>
    <scope>NUCLEOTIDE SEQUENCE [LARGE SCALE GENOMIC DNA]</scope>
    <source>
        <strain>ATCC 11170 / ATH 1.1.1 / DSM 467 / LMG 4362 / NCIMB 8255 / S1</strain>
    </source>
</reference>